<keyword id="KW-0004">4Fe-4S</keyword>
<keyword id="KW-0067">ATP-binding</keyword>
<keyword id="KW-0149">Chlorophyll biosynthesis</keyword>
<keyword id="KW-0150">Chloroplast</keyword>
<keyword id="KW-0408">Iron</keyword>
<keyword id="KW-0411">Iron-sulfur</keyword>
<keyword id="KW-0460">Magnesium</keyword>
<keyword id="KW-0479">Metal-binding</keyword>
<keyword id="KW-0547">Nucleotide-binding</keyword>
<keyword id="KW-0560">Oxidoreductase</keyword>
<keyword id="KW-0602">Photosynthesis</keyword>
<keyword id="KW-0934">Plastid</keyword>
<keyword id="KW-0691">RNA editing</keyword>
<proteinExistence type="evidence at transcript level"/>
<name>CHLL_ADICA</name>
<feature type="chain" id="PRO_0000139550" description="Light-independent protochlorophyllide reductase iron-sulfur ATP-binding protein">
    <location>
        <begin position="1"/>
        <end position="293"/>
    </location>
</feature>
<feature type="binding site" evidence="1">
    <location>
        <begin position="10"/>
        <end position="15"/>
    </location>
    <ligand>
        <name>ATP</name>
        <dbReference type="ChEBI" id="CHEBI:30616"/>
    </ligand>
</feature>
<feature type="binding site" evidence="1">
    <location>
        <position position="14"/>
    </location>
    <ligand>
        <name>Mg(2+)</name>
        <dbReference type="ChEBI" id="CHEBI:18420"/>
    </ligand>
</feature>
<feature type="binding site" evidence="1">
    <location>
        <position position="39"/>
    </location>
    <ligand>
        <name>ATP</name>
        <dbReference type="ChEBI" id="CHEBI:30616"/>
    </ligand>
</feature>
<feature type="binding site" evidence="1">
    <location>
        <position position="95"/>
    </location>
    <ligand>
        <name>[4Fe-4S] cluster</name>
        <dbReference type="ChEBI" id="CHEBI:49883"/>
        <note>ligand shared between dimeric partners</note>
    </ligand>
</feature>
<feature type="binding site" evidence="1">
    <location>
        <position position="129"/>
    </location>
    <ligand>
        <name>[4Fe-4S] cluster</name>
        <dbReference type="ChEBI" id="CHEBI:49883"/>
        <note>ligand shared between dimeric partners</note>
    </ligand>
</feature>
<feature type="binding site" evidence="1">
    <location>
        <begin position="180"/>
        <end position="181"/>
    </location>
    <ligand>
        <name>ATP</name>
        <dbReference type="ChEBI" id="CHEBI:30616"/>
    </ligand>
</feature>
<dbReference type="EC" id="1.3.7.7" evidence="1"/>
<dbReference type="EMBL" id="AY178864">
    <property type="protein sequence ID" value="AAP29451.2"/>
    <property type="molecule type" value="Genomic_DNA"/>
</dbReference>
<dbReference type="RefSeq" id="NP_848120.2">
    <property type="nucleotide sequence ID" value="NC_004766.1"/>
</dbReference>
<dbReference type="SMR" id="Q85FG5"/>
<dbReference type="GeneID" id="807458"/>
<dbReference type="UniPathway" id="UPA00670"/>
<dbReference type="GO" id="GO:0009507">
    <property type="term" value="C:chloroplast"/>
    <property type="evidence" value="ECO:0007669"/>
    <property type="project" value="UniProtKB-SubCell"/>
</dbReference>
<dbReference type="GO" id="GO:0051539">
    <property type="term" value="F:4 iron, 4 sulfur cluster binding"/>
    <property type="evidence" value="ECO:0007669"/>
    <property type="project" value="UniProtKB-UniRule"/>
</dbReference>
<dbReference type="GO" id="GO:0005524">
    <property type="term" value="F:ATP binding"/>
    <property type="evidence" value="ECO:0007669"/>
    <property type="project" value="UniProtKB-UniRule"/>
</dbReference>
<dbReference type="GO" id="GO:0046872">
    <property type="term" value="F:metal ion binding"/>
    <property type="evidence" value="ECO:0007669"/>
    <property type="project" value="UniProtKB-KW"/>
</dbReference>
<dbReference type="GO" id="GO:0016730">
    <property type="term" value="F:oxidoreductase activity, acting on iron-sulfur proteins as donors"/>
    <property type="evidence" value="ECO:0007669"/>
    <property type="project" value="InterPro"/>
</dbReference>
<dbReference type="GO" id="GO:0016636">
    <property type="term" value="F:oxidoreductase activity, acting on the CH-CH group of donors, iron-sulfur protein as acceptor"/>
    <property type="evidence" value="ECO:0007669"/>
    <property type="project" value="UniProtKB-UniRule"/>
</dbReference>
<dbReference type="GO" id="GO:0036068">
    <property type="term" value="P:light-independent chlorophyll biosynthetic process"/>
    <property type="evidence" value="ECO:0007669"/>
    <property type="project" value="UniProtKB-UniRule"/>
</dbReference>
<dbReference type="GO" id="GO:0019685">
    <property type="term" value="P:photosynthesis, dark reaction"/>
    <property type="evidence" value="ECO:0007669"/>
    <property type="project" value="InterPro"/>
</dbReference>
<dbReference type="CDD" id="cd02032">
    <property type="entry name" value="Bchl-like"/>
    <property type="match status" value="1"/>
</dbReference>
<dbReference type="Gene3D" id="3.40.50.300">
    <property type="entry name" value="P-loop containing nucleotide triphosphate hydrolases"/>
    <property type="match status" value="1"/>
</dbReference>
<dbReference type="HAMAP" id="MF_00355">
    <property type="entry name" value="ChlL_BchL"/>
    <property type="match status" value="1"/>
</dbReference>
<dbReference type="InterPro" id="IPR030655">
    <property type="entry name" value="NifH/chlL_CS"/>
</dbReference>
<dbReference type="InterPro" id="IPR000392">
    <property type="entry name" value="NifH/frxC"/>
</dbReference>
<dbReference type="InterPro" id="IPR027417">
    <property type="entry name" value="P-loop_NTPase"/>
</dbReference>
<dbReference type="InterPro" id="IPR005971">
    <property type="entry name" value="Protochlorophyllide_ATP-bd"/>
</dbReference>
<dbReference type="NCBIfam" id="TIGR01281">
    <property type="entry name" value="DPOR_bchL"/>
    <property type="match status" value="1"/>
</dbReference>
<dbReference type="PANTHER" id="PTHR42864">
    <property type="entry name" value="LIGHT-INDEPENDENT PROTOCHLOROPHYLLIDE REDUCTASE IRON-SULFUR ATP-BINDING PROTEIN"/>
    <property type="match status" value="1"/>
</dbReference>
<dbReference type="PANTHER" id="PTHR42864:SF2">
    <property type="entry name" value="LIGHT-INDEPENDENT PROTOCHLOROPHYLLIDE REDUCTASE IRON-SULFUR ATP-BINDING PROTEIN"/>
    <property type="match status" value="1"/>
</dbReference>
<dbReference type="Pfam" id="PF00142">
    <property type="entry name" value="Fer4_NifH"/>
    <property type="match status" value="1"/>
</dbReference>
<dbReference type="PIRSF" id="PIRSF000363">
    <property type="entry name" value="Nitrogenase_iron"/>
    <property type="match status" value="1"/>
</dbReference>
<dbReference type="PRINTS" id="PR00091">
    <property type="entry name" value="NITROGNASEII"/>
</dbReference>
<dbReference type="SUPFAM" id="SSF52540">
    <property type="entry name" value="P-loop containing nucleoside triphosphate hydrolases"/>
    <property type="match status" value="1"/>
</dbReference>
<dbReference type="PROSITE" id="PS00746">
    <property type="entry name" value="NIFH_FRXC_1"/>
    <property type="match status" value="1"/>
</dbReference>
<dbReference type="PROSITE" id="PS00692">
    <property type="entry name" value="NIFH_FRXC_2"/>
    <property type="match status" value="1"/>
</dbReference>
<dbReference type="PROSITE" id="PS51026">
    <property type="entry name" value="NIFH_FRXC_3"/>
    <property type="match status" value="1"/>
</dbReference>
<accession>Q85FG5</accession>
<sequence>MKVAVYGKGGIGKSTTSCNISIALARRGRKVLQIGCDPKHDSTFTLTGFLIPTIIDTLQVKDYHYEDVWPEDVIYRGYGGVDCVEAGGPPAGAGCGGYVVGETVKLLKELNAFYEYDIILFDVLGDVVCGGFAAPLNYADYCIIITDNGFDALFAANRIAASVREKSHTHPLRLAGLVGNRTSGRDLIDKYVEACPMPVLEVLPLVEDIRVSRVKGKTLFEMAEYQPNLNYVCDFYLNIADQILSEPEGVVPREIPDRELFSLLSDFYLNSTFTNESDGGYDHQDVPLDFTII</sequence>
<geneLocation type="chloroplast"/>
<reference key="1">
    <citation type="journal article" date="2003" name="DNA Res.">
        <title>Complete nucleotide sequence of the chloroplast genome from a leptosporangiate fern, Adiantum capillus-veneris L.</title>
        <authorList>
            <person name="Wolf P.G."/>
            <person name="Rowe C.A."/>
            <person name="Sinclair R.B."/>
            <person name="Hasebe M."/>
        </authorList>
    </citation>
    <scope>NUCLEOTIDE SEQUENCE [LARGE SCALE GENOMIC DNA]</scope>
</reference>
<reference key="2">
    <citation type="journal article" date="2004" name="Gene">
        <title>High levels of RNA editing in a vascular plant chloroplast genome: analysis of transcripts from the fern Adiantum capillus-veneris.</title>
        <authorList>
            <person name="Wolf P.G."/>
            <person name="Rowe C.A."/>
            <person name="Hasebe M."/>
        </authorList>
    </citation>
    <scope>NUCLEOTIDE SEQUENCE [GENOMIC DNA]</scope>
    <scope>RNA EDITING</scope>
    <source>
        <tissue>Frond</tissue>
    </source>
</reference>
<gene>
    <name evidence="1" type="primary">chlL</name>
</gene>
<protein>
    <recommendedName>
        <fullName evidence="1">Light-independent protochlorophyllide reductase iron-sulfur ATP-binding protein</fullName>
        <shortName evidence="1">DPOR subunit L</shortName>
        <shortName evidence="1">LI-POR subunit L</shortName>
        <ecNumber evidence="1">1.3.7.7</ecNumber>
    </recommendedName>
</protein>
<evidence type="ECO:0000255" key="1">
    <source>
        <dbReference type="HAMAP-Rule" id="MF_00355"/>
    </source>
</evidence>
<evidence type="ECO:0000269" key="2">
    <source>
    </source>
</evidence>
<comment type="function">
    <text evidence="1">Component of the dark-operative protochlorophyllide reductase (DPOR) that uses Mg-ATP and reduced ferredoxin to reduce ring D of protochlorophyllide (Pchlide) to form chlorophyllide a (Chlide). This reaction is light-independent. The L component serves as a unique electron donor to the NB-component of the complex, and binds Mg-ATP.</text>
</comment>
<comment type="catalytic activity">
    <reaction evidence="1">
        <text>chlorophyllide a + oxidized 2[4Fe-4S]-[ferredoxin] + 2 ADP + 2 phosphate = protochlorophyllide a + reduced 2[4Fe-4S]-[ferredoxin] + 2 ATP + 2 H2O</text>
        <dbReference type="Rhea" id="RHEA:28202"/>
        <dbReference type="Rhea" id="RHEA-COMP:10002"/>
        <dbReference type="Rhea" id="RHEA-COMP:10004"/>
        <dbReference type="ChEBI" id="CHEBI:15377"/>
        <dbReference type="ChEBI" id="CHEBI:30616"/>
        <dbReference type="ChEBI" id="CHEBI:33722"/>
        <dbReference type="ChEBI" id="CHEBI:33723"/>
        <dbReference type="ChEBI" id="CHEBI:43474"/>
        <dbReference type="ChEBI" id="CHEBI:83348"/>
        <dbReference type="ChEBI" id="CHEBI:83350"/>
        <dbReference type="ChEBI" id="CHEBI:456216"/>
        <dbReference type="EC" id="1.3.7.7"/>
    </reaction>
</comment>
<comment type="cofactor">
    <cofactor evidence="1">
        <name>[4Fe-4S] cluster</name>
        <dbReference type="ChEBI" id="CHEBI:49883"/>
    </cofactor>
    <text evidence="1">Binds 1 [4Fe-4S] cluster per dimer.</text>
</comment>
<comment type="pathway">
    <text evidence="1">Porphyrin-containing compound metabolism; chlorophyll biosynthesis (light-independent).</text>
</comment>
<comment type="subunit">
    <text evidence="1">Homodimer. Protochlorophyllide reductase is composed of three subunits; ChlL, ChlN and ChlB.</text>
</comment>
<comment type="subcellular location">
    <subcellularLocation>
        <location>Plastid</location>
        <location>Chloroplast</location>
    </subcellularLocation>
</comment>
<comment type="RNA editing">
    <location>
        <position position="1" evidence="2"/>
    </location>
    <location>
        <position position="83" evidence="2"/>
    </location>
    <location>
        <position position="106" evidence="2"/>
    </location>
    <location>
        <position position="120" evidence="2"/>
    </location>
    <location>
        <position position="128" evidence="2"/>
    </location>
    <location>
        <position position="233" evidence="2"/>
    </location>
    <location>
        <position position="236" evidence="2"/>
    </location>
    <location>
        <position position="242" evidence="2"/>
    </location>
    <location>
        <position position="294" evidence="2"/>
    </location>
    <text>The initiator methionine is created by RNA editing. The nonsense codon at position 242 is edited to a sense codon. The stop codon at position 294 is created by RNA editing.</text>
</comment>
<comment type="similarity">
    <text evidence="1">Belongs to the NifH/BchL/ChlL family.</text>
</comment>
<organism>
    <name type="scientific">Adiantum capillus-veneris</name>
    <name type="common">Maidenhair fern</name>
    <dbReference type="NCBI Taxonomy" id="13818"/>
    <lineage>
        <taxon>Eukaryota</taxon>
        <taxon>Viridiplantae</taxon>
        <taxon>Streptophyta</taxon>
        <taxon>Embryophyta</taxon>
        <taxon>Tracheophyta</taxon>
        <taxon>Polypodiopsida</taxon>
        <taxon>Polypodiidae</taxon>
        <taxon>Polypodiales</taxon>
        <taxon>Pteridineae</taxon>
        <taxon>Pteridaceae</taxon>
        <taxon>Vittarioideae</taxon>
        <taxon>Adiantum</taxon>
    </lineage>
</organism>